<keyword id="KW-0067">ATP-binding</keyword>
<keyword id="KW-0119">Carbohydrate metabolism</keyword>
<keyword id="KW-0418">Kinase</keyword>
<keyword id="KW-0547">Nucleotide-binding</keyword>
<keyword id="KW-0808">Transferase</keyword>
<keyword id="KW-0859">Xylose metabolism</keyword>
<protein>
    <recommendedName>
        <fullName evidence="1">Xylulose kinase</fullName>
        <shortName evidence="1">Xylulokinase</shortName>
        <ecNumber evidence="1">2.7.1.17</ecNumber>
    </recommendedName>
</protein>
<gene>
    <name evidence="1" type="primary">xylB</name>
</gene>
<evidence type="ECO:0000255" key="1">
    <source>
        <dbReference type="HAMAP-Rule" id="MF_02220"/>
    </source>
</evidence>
<evidence type="ECO:0000305" key="2"/>
<proteinExistence type="inferred from homology"/>
<name>XYLB_STAXY</name>
<accession>P27155</accession>
<comment type="function">
    <text evidence="1">Catalyzes the phosphorylation of D-xylulose to D-xylulose 5-phosphate.</text>
</comment>
<comment type="catalytic activity">
    <reaction evidence="1">
        <text>D-xylulose + ATP = D-xylulose 5-phosphate + ADP + H(+)</text>
        <dbReference type="Rhea" id="RHEA:10964"/>
        <dbReference type="ChEBI" id="CHEBI:15378"/>
        <dbReference type="ChEBI" id="CHEBI:17140"/>
        <dbReference type="ChEBI" id="CHEBI:30616"/>
        <dbReference type="ChEBI" id="CHEBI:57737"/>
        <dbReference type="ChEBI" id="CHEBI:456216"/>
        <dbReference type="EC" id="2.7.1.17"/>
    </reaction>
</comment>
<comment type="similarity">
    <text evidence="1 2">Belongs to the FGGY kinase family.</text>
</comment>
<reference key="1">
    <citation type="journal article" date="1991" name="Mol. Gen. Genet.">
        <title>Organization, promoter analysis and transcriptional regulation of the Staphylococcus xylosus xylose utilization operon.</title>
        <authorList>
            <person name="Sizemore C."/>
            <person name="Buchner E."/>
            <person name="Rygus T."/>
            <person name="Witke C."/>
            <person name="Goetz F."/>
            <person name="Hillen W."/>
        </authorList>
    </citation>
    <scope>NUCLEOTIDE SEQUENCE [GENOMIC DNA]</scope>
    <source>
        <strain>DSM 20267 / Isolate C2A</strain>
    </source>
</reference>
<feature type="chain" id="PRO_0000059557" description="Xylulose kinase">
    <location>
        <begin position="1"/>
        <end position="483"/>
    </location>
</feature>
<feature type="binding site" evidence="1">
    <location>
        <begin position="79"/>
        <end position="80"/>
    </location>
    <ligand>
        <name>substrate</name>
    </ligand>
</feature>
<feature type="site" description="Important for activity" evidence="1">
    <location>
        <position position="8"/>
    </location>
</feature>
<dbReference type="EC" id="2.7.1.17" evidence="1"/>
<dbReference type="EMBL" id="X57599">
    <property type="protein sequence ID" value="CAA40825.1"/>
    <property type="molecule type" value="Genomic_DNA"/>
</dbReference>
<dbReference type="PIR" id="S16531">
    <property type="entry name" value="S16531"/>
</dbReference>
<dbReference type="SMR" id="P27155"/>
<dbReference type="STRING" id="1288.AWC37_11475"/>
<dbReference type="eggNOG" id="COG1070">
    <property type="taxonomic scope" value="Bacteria"/>
</dbReference>
<dbReference type="GO" id="GO:0005524">
    <property type="term" value="F:ATP binding"/>
    <property type="evidence" value="ECO:0007669"/>
    <property type="project" value="UniProtKB-UniRule"/>
</dbReference>
<dbReference type="GO" id="GO:0004856">
    <property type="term" value="F:D-xylulokinase activity"/>
    <property type="evidence" value="ECO:0007669"/>
    <property type="project" value="UniProtKB-UniRule"/>
</dbReference>
<dbReference type="GO" id="GO:0042732">
    <property type="term" value="P:D-xylose metabolic process"/>
    <property type="evidence" value="ECO:0007669"/>
    <property type="project" value="UniProtKB-KW"/>
</dbReference>
<dbReference type="GO" id="GO:0005998">
    <property type="term" value="P:xylulose catabolic process"/>
    <property type="evidence" value="ECO:0007669"/>
    <property type="project" value="UniProtKB-UniRule"/>
</dbReference>
<dbReference type="CDD" id="cd07808">
    <property type="entry name" value="ASKHA_NBD_FGGY_EcXK-like"/>
    <property type="match status" value="1"/>
</dbReference>
<dbReference type="Gene3D" id="3.30.420.40">
    <property type="match status" value="2"/>
</dbReference>
<dbReference type="HAMAP" id="MF_02220">
    <property type="entry name" value="XylB"/>
    <property type="match status" value="1"/>
</dbReference>
<dbReference type="InterPro" id="IPR043129">
    <property type="entry name" value="ATPase_NBD"/>
</dbReference>
<dbReference type="InterPro" id="IPR000577">
    <property type="entry name" value="Carb_kinase_FGGY"/>
</dbReference>
<dbReference type="InterPro" id="IPR018483">
    <property type="entry name" value="Carb_kinase_FGGY_CS"/>
</dbReference>
<dbReference type="InterPro" id="IPR018485">
    <property type="entry name" value="FGGY_C"/>
</dbReference>
<dbReference type="InterPro" id="IPR050406">
    <property type="entry name" value="FGGY_Carb_Kinase"/>
</dbReference>
<dbReference type="InterPro" id="IPR018484">
    <property type="entry name" value="FGGY_N"/>
</dbReference>
<dbReference type="InterPro" id="IPR006000">
    <property type="entry name" value="Xylulokinase"/>
</dbReference>
<dbReference type="NCBIfam" id="TIGR01312">
    <property type="entry name" value="XylB"/>
    <property type="match status" value="1"/>
</dbReference>
<dbReference type="PANTHER" id="PTHR43095">
    <property type="entry name" value="SUGAR KINASE"/>
    <property type="match status" value="1"/>
</dbReference>
<dbReference type="PANTHER" id="PTHR43095:SF5">
    <property type="entry name" value="XYLULOSE KINASE"/>
    <property type="match status" value="1"/>
</dbReference>
<dbReference type="Pfam" id="PF02782">
    <property type="entry name" value="FGGY_C"/>
    <property type="match status" value="1"/>
</dbReference>
<dbReference type="Pfam" id="PF00370">
    <property type="entry name" value="FGGY_N"/>
    <property type="match status" value="1"/>
</dbReference>
<dbReference type="PIRSF" id="PIRSF000538">
    <property type="entry name" value="GlpK"/>
    <property type="match status" value="1"/>
</dbReference>
<dbReference type="SUPFAM" id="SSF53067">
    <property type="entry name" value="Actin-like ATPase domain"/>
    <property type="match status" value="2"/>
</dbReference>
<dbReference type="PROSITE" id="PS00933">
    <property type="entry name" value="FGGY_KINASES_1"/>
    <property type="match status" value="1"/>
</dbReference>
<dbReference type="PROSITE" id="PS00445">
    <property type="entry name" value="FGGY_KINASES_2"/>
    <property type="match status" value="1"/>
</dbReference>
<sequence>MAYVIGIDIGTSALKTLVVNKSGDVVESYSVSYNTAHPKSGYSEIDPEIWYEATLESLKYILNHYTHNDLTGISFSGQMHGLVVIDQEGNPIRPAILWNDTRTSQEVEDIKKNLGLNSLLQLTQNTVLEGFTLPKLMWLKNHEQDNYKRIYKFMLPKDYIVYKLTGNVYTEPSDAAGTIMFSVKDENWSTELLHRLNIDPSICPEIIASHQKSGQLTEKVKNTLGIDSNINVYQGGANNACGALGSGITDEQKQLVSIGTSGVALSIENSTDYENDGNVHYFNHCVPNQKYIMGVTLSAGYSLEWLKQLISADENFTTFLKDINQSEVGANGLMYTPYLLGERTPHNDASVRGSFIGLDANTTQLDMKRAVIEGITYSINESIHIMKNNAININEIVSIGGGAKNNQWLQIQADIFNTTITTRTEEQGPAYGAAMIAAMGEQWFNTFNEMSEAWIAYHQKVYPIETNTKSYQDLFNIYKTIYD</sequence>
<organism>
    <name type="scientific">Staphylococcus xylosus</name>
    <dbReference type="NCBI Taxonomy" id="1288"/>
    <lineage>
        <taxon>Bacteria</taxon>
        <taxon>Bacillati</taxon>
        <taxon>Bacillota</taxon>
        <taxon>Bacilli</taxon>
        <taxon>Bacillales</taxon>
        <taxon>Staphylococcaceae</taxon>
        <taxon>Staphylococcus</taxon>
    </lineage>
</organism>